<evidence type="ECO:0000255" key="1">
    <source>
        <dbReference type="HAMAP-Rule" id="MF_00368"/>
    </source>
</evidence>
<evidence type="ECO:0000305" key="2"/>
<proteinExistence type="inferred from homology"/>
<gene>
    <name evidence="1" type="primary">rplL</name>
    <name type="ordered locus">ML1895</name>
</gene>
<sequence>MSKLSSDELLDVFKEMTLLELSDFVKKFEETFEVTAAAPVSVAVAGAPAAGEAGEAAEEQSEFDVILESAGDKKIGVIKVVREIVSGLGLKEAKDLVDGVPKLLLEKVAKEAADDAKAKLEATGATVSVK</sequence>
<reference key="1">
    <citation type="journal article" date="1993" name="Mol. Microbiol.">
        <title>Nucleotide sequence of the first cosmid from the Mycobacterium leprae genome project: structure and function of the Rif-Str regions.</title>
        <authorList>
            <person name="Honore N.T."/>
            <person name="Bergh S."/>
            <person name="Chanteau S."/>
            <person name="Doucet-Populaire F."/>
            <person name="Eiglmeier K."/>
            <person name="Garnier T."/>
            <person name="Georges C."/>
            <person name="Launois P."/>
            <person name="Limpaiboon T."/>
            <person name="Newton S."/>
            <person name="Niang K."/>
            <person name="del Portillo P."/>
            <person name="Ramesh G.R."/>
            <person name="Reddi P."/>
            <person name="Ridel P.R."/>
            <person name="Sittisombut N."/>
            <person name="Wu-Hunter S."/>
            <person name="Cole S.T."/>
        </authorList>
    </citation>
    <scope>NUCLEOTIDE SEQUENCE [GENOMIC DNA]</scope>
</reference>
<reference key="2">
    <citation type="journal article" date="2001" name="Nature">
        <title>Massive gene decay in the leprosy bacillus.</title>
        <authorList>
            <person name="Cole S.T."/>
            <person name="Eiglmeier K."/>
            <person name="Parkhill J."/>
            <person name="James K.D."/>
            <person name="Thomson N.R."/>
            <person name="Wheeler P.R."/>
            <person name="Honore N."/>
            <person name="Garnier T."/>
            <person name="Churcher C.M."/>
            <person name="Harris D.E."/>
            <person name="Mungall K.L."/>
            <person name="Basham D."/>
            <person name="Brown D."/>
            <person name="Chillingworth T."/>
            <person name="Connor R."/>
            <person name="Davies R.M."/>
            <person name="Devlin K."/>
            <person name="Duthoy S."/>
            <person name="Feltwell T."/>
            <person name="Fraser A."/>
            <person name="Hamlin N."/>
            <person name="Holroyd S."/>
            <person name="Hornsby T."/>
            <person name="Jagels K."/>
            <person name="Lacroix C."/>
            <person name="Maclean J."/>
            <person name="Moule S."/>
            <person name="Murphy L.D."/>
            <person name="Oliver K."/>
            <person name="Quail M.A."/>
            <person name="Rajandream M.A."/>
            <person name="Rutherford K.M."/>
            <person name="Rutter S."/>
            <person name="Seeger K."/>
            <person name="Simon S."/>
            <person name="Simmonds M."/>
            <person name="Skelton J."/>
            <person name="Squares R."/>
            <person name="Squares S."/>
            <person name="Stevens K."/>
            <person name="Taylor K."/>
            <person name="Whitehead S."/>
            <person name="Woodward J.R."/>
            <person name="Barrell B.G."/>
        </authorList>
    </citation>
    <scope>NUCLEOTIDE SEQUENCE [LARGE SCALE GENOMIC DNA]</scope>
    <source>
        <strain>TN</strain>
    </source>
</reference>
<dbReference type="EMBL" id="Z14314">
    <property type="protein sequence ID" value="CAA78666.1"/>
    <property type="molecule type" value="Genomic_DNA"/>
</dbReference>
<dbReference type="EMBL" id="AL583923">
    <property type="protein sequence ID" value="CAC30849.1"/>
    <property type="molecule type" value="Genomic_DNA"/>
</dbReference>
<dbReference type="PIR" id="A87146">
    <property type="entry name" value="A87146"/>
</dbReference>
<dbReference type="PIR" id="S31143">
    <property type="entry name" value="S31143"/>
</dbReference>
<dbReference type="RefSeq" id="NP_302275.1">
    <property type="nucleotide sequence ID" value="NC_002677.1"/>
</dbReference>
<dbReference type="RefSeq" id="WP_010908596.1">
    <property type="nucleotide sequence ID" value="NC_002677.1"/>
</dbReference>
<dbReference type="SMR" id="P30763"/>
<dbReference type="STRING" id="272631.gene:17575743"/>
<dbReference type="KEGG" id="mle:ML1895"/>
<dbReference type="PATRIC" id="fig|272631.5.peg.3592"/>
<dbReference type="Leproma" id="ML1895"/>
<dbReference type="eggNOG" id="COG0222">
    <property type="taxonomic scope" value="Bacteria"/>
</dbReference>
<dbReference type="HOGENOM" id="CLU_086499_3_0_11"/>
<dbReference type="OrthoDB" id="9811748at2"/>
<dbReference type="Proteomes" id="UP000000806">
    <property type="component" value="Chromosome"/>
</dbReference>
<dbReference type="GO" id="GO:0022625">
    <property type="term" value="C:cytosolic large ribosomal subunit"/>
    <property type="evidence" value="ECO:0007669"/>
    <property type="project" value="TreeGrafter"/>
</dbReference>
<dbReference type="GO" id="GO:0003729">
    <property type="term" value="F:mRNA binding"/>
    <property type="evidence" value="ECO:0007669"/>
    <property type="project" value="TreeGrafter"/>
</dbReference>
<dbReference type="GO" id="GO:0003735">
    <property type="term" value="F:structural constituent of ribosome"/>
    <property type="evidence" value="ECO:0007669"/>
    <property type="project" value="InterPro"/>
</dbReference>
<dbReference type="GO" id="GO:0006412">
    <property type="term" value="P:translation"/>
    <property type="evidence" value="ECO:0007669"/>
    <property type="project" value="UniProtKB-UniRule"/>
</dbReference>
<dbReference type="CDD" id="cd00387">
    <property type="entry name" value="Ribosomal_L7_L12"/>
    <property type="match status" value="1"/>
</dbReference>
<dbReference type="FunFam" id="1.20.5.710:FF:000005">
    <property type="entry name" value="50S ribosomal protein L7/L12"/>
    <property type="match status" value="1"/>
</dbReference>
<dbReference type="FunFam" id="3.30.1390.10:FF:000001">
    <property type="entry name" value="50S ribosomal protein L7/L12"/>
    <property type="match status" value="1"/>
</dbReference>
<dbReference type="Gene3D" id="3.30.1390.10">
    <property type="match status" value="1"/>
</dbReference>
<dbReference type="Gene3D" id="1.20.5.710">
    <property type="entry name" value="Single helix bin"/>
    <property type="match status" value="1"/>
</dbReference>
<dbReference type="HAMAP" id="MF_00368">
    <property type="entry name" value="Ribosomal_bL12"/>
    <property type="match status" value="1"/>
</dbReference>
<dbReference type="InterPro" id="IPR000206">
    <property type="entry name" value="Ribosomal_bL12"/>
</dbReference>
<dbReference type="InterPro" id="IPR013823">
    <property type="entry name" value="Ribosomal_bL12_C"/>
</dbReference>
<dbReference type="InterPro" id="IPR014719">
    <property type="entry name" value="Ribosomal_bL12_C/ClpS-like"/>
</dbReference>
<dbReference type="InterPro" id="IPR008932">
    <property type="entry name" value="Ribosomal_bL12_oligo"/>
</dbReference>
<dbReference type="InterPro" id="IPR036235">
    <property type="entry name" value="Ribosomal_bL12_oligo_N_sf"/>
</dbReference>
<dbReference type="NCBIfam" id="TIGR00855">
    <property type="entry name" value="L12"/>
    <property type="match status" value="1"/>
</dbReference>
<dbReference type="PANTHER" id="PTHR45987">
    <property type="entry name" value="39S RIBOSOMAL PROTEIN L12"/>
    <property type="match status" value="1"/>
</dbReference>
<dbReference type="PANTHER" id="PTHR45987:SF4">
    <property type="entry name" value="LARGE RIBOSOMAL SUBUNIT PROTEIN BL12M"/>
    <property type="match status" value="1"/>
</dbReference>
<dbReference type="Pfam" id="PF00542">
    <property type="entry name" value="Ribosomal_L12"/>
    <property type="match status" value="1"/>
</dbReference>
<dbReference type="Pfam" id="PF16320">
    <property type="entry name" value="Ribosomal_L12_N"/>
    <property type="match status" value="1"/>
</dbReference>
<dbReference type="SUPFAM" id="SSF54736">
    <property type="entry name" value="ClpS-like"/>
    <property type="match status" value="1"/>
</dbReference>
<dbReference type="SUPFAM" id="SSF48300">
    <property type="entry name" value="Ribosomal protein L7/12, oligomerisation (N-terminal) domain"/>
    <property type="match status" value="1"/>
</dbReference>
<accession>P30763</accession>
<name>RL7_MYCLE</name>
<feature type="chain" id="PRO_0000157549" description="Large ribosomal subunit protein bL12">
    <location>
        <begin position="1"/>
        <end position="130"/>
    </location>
</feature>
<feature type="sequence conflict" description="In Ref. 1; CAA78666." evidence="2" ref="1">
    <original>GL</original>
    <variation>AV</variation>
    <location>
        <begin position="89"/>
        <end position="90"/>
    </location>
</feature>
<comment type="function">
    <text evidence="1">Forms part of the ribosomal stalk which helps the ribosome interact with GTP-bound translation factors. Is thus essential for accurate translation.</text>
</comment>
<comment type="subunit">
    <text evidence="1">Homodimer. Part of the ribosomal stalk of the 50S ribosomal subunit. Forms a multimeric L10(L12)X complex, where L10 forms an elongated spine to which 2 to 4 L12 dimers bind in a sequential fashion. Binds GTP-bound translation factors.</text>
</comment>
<comment type="similarity">
    <text evidence="1">Belongs to the bacterial ribosomal protein bL12 family.</text>
</comment>
<keyword id="KW-1185">Reference proteome</keyword>
<keyword id="KW-0687">Ribonucleoprotein</keyword>
<keyword id="KW-0689">Ribosomal protein</keyword>
<organism>
    <name type="scientific">Mycobacterium leprae (strain TN)</name>
    <dbReference type="NCBI Taxonomy" id="272631"/>
    <lineage>
        <taxon>Bacteria</taxon>
        <taxon>Bacillati</taxon>
        <taxon>Actinomycetota</taxon>
        <taxon>Actinomycetes</taxon>
        <taxon>Mycobacteriales</taxon>
        <taxon>Mycobacteriaceae</taxon>
        <taxon>Mycobacterium</taxon>
    </lineage>
</organism>
<protein>
    <recommendedName>
        <fullName evidence="1">Large ribosomal subunit protein bL12</fullName>
    </recommendedName>
    <alternativeName>
        <fullName evidence="2">50S ribosomal protein L7/L12</fullName>
    </alternativeName>
</protein>